<gene>
    <name type="primary">ctpI</name>
    <name type="ordered locus">Rv0107c</name>
    <name type="ORF">MTCY251.26c</name>
</gene>
<keyword id="KW-0067">ATP-binding</keyword>
<keyword id="KW-1003">Cell membrane</keyword>
<keyword id="KW-0460">Magnesium</keyword>
<keyword id="KW-0472">Membrane</keyword>
<keyword id="KW-0479">Metal-binding</keyword>
<keyword id="KW-0547">Nucleotide-binding</keyword>
<keyword id="KW-1185">Reference proteome</keyword>
<keyword id="KW-1278">Translocase</keyword>
<keyword id="KW-0812">Transmembrane</keyword>
<keyword id="KW-1133">Transmembrane helix</keyword>
<organism>
    <name type="scientific">Mycobacterium tuberculosis (strain ATCC 25618 / H37Rv)</name>
    <dbReference type="NCBI Taxonomy" id="83332"/>
    <lineage>
        <taxon>Bacteria</taxon>
        <taxon>Bacillati</taxon>
        <taxon>Actinomycetota</taxon>
        <taxon>Actinomycetes</taxon>
        <taxon>Mycobacteriales</taxon>
        <taxon>Mycobacteriaceae</taxon>
        <taxon>Mycobacterium</taxon>
        <taxon>Mycobacterium tuberculosis complex</taxon>
    </lineage>
</organism>
<sequence length="1632" mass="169607">MKIPGVATVLGGVTNGVAQTVRAGARLPGSAAAAVQTLASPVLELTGPVVQSVVQTTGRAIGVRGSHNESPDGMTPPVRWRSGRRVHFDLDPLLPFPRWHEHAAMVEEPVRRIPGVAEAHVEGSLGRLVVELEPDADSDIAVDEVRDVVSAVAADIFLAGSVSSPNSAPFADPGNPLAILVPLTAAAMDLVAMGATVTGWVARLPAAPQTTRALAALINHQPRMVSLMESRLGRVGTDIALAATTAAANGLTQSLGTPLLDLVQRSLQISEAAAHRRVWRDREPALASPRRPQAPVVPIISSAGAKSQEPRHSWAAAAAGEASHVVVGGSIDAAIDTAKGSRAGPVEQYVNQAANGSLIAAASALVAGGGTEDAAGAILAGVPRAAHMGRQAFAAVLGRGLANTGQLVLDPGALRRLDRVRVVVIDGAALRGDNRAVLHAQGDEPGWDDDRVYEVADALLHGEQAPEPDPDELPATGARLRWAPAQGPSATPAQGLEHADLVVDGQCVGSVDVGWEVDPYAIPLLQTAHRTGARVVLRHVAGTEDLSASVGSTHPPGTPLLKLVRELRADRGPVLLITAVHRDFASTDTLAALAIADVGVALDDPRGATPWTADLITGTDLAAAVRILSALPVARAASESAVHLAQGGTTLAGLLLVTGEQDKTTNPASFRRWLNPVNAAAATALVSGMWSAAKVLRMPDPTPQPLTAWHALDPEIVYSRLAGGSRPLAVEPGIPAWRRILDDLSYEPVMAPLRGPARTLAQLAVATRHELADPLTPILAVGAAASAIVGSNIDALLVAGVMTVNAITGGVQRLRAEAAAAELFAEQDQLVRRVVVPAVATTRRRLEAARHATRTATVSAKSLRVGDVIDLAAPEVVPADARLLVAEDLEVDESFLTGESLPVDKQVDPVAVNDPDRASMLFEGSTIVAGHARAIVVATGVGTAAHRAISAVADVETAAGVQARLRELTSKVLPMTLAGGAAVTALALLRRASLRQAVADGVAIAVAAVPEGLPLVATLSQLAAAQRLTARGALVRSPRTIEALGRVDTICFDKTGTLTENRLRVVCALPSSTAAERDPLPQTTDAPSAEVLRAAARASTQPHNGEGHAHATDEAILAAASALAGSLSSQGDSEWVVLAEVPFESSRGYAAAIGRVGTDGIPMLMLKGAPETILPRCRLADPGVDHEHAESVVRHLAEQGLRVLAVAQRTWDNGTTHDDETDADAVDAVAHDLELIGYVGLADTARSSSRPLIEALLDAERNVVLITGDHPITARAIARQLGLPADARVVTGAELAVLDEEAHAKLAADMQVFARVSPEQKVQIVAALQRCGRVTAMVGDGANDAAAIRMADVGIGVSGRGSSAARGAADIVLTDDDLGVLLDALVEGRSMWAGVRDAVTILVGGNVGEVLFTVIGTAFGAGRAPVGTRQLLLVNLLTDMFPALAVAVTSQFAEPDDAEYPTDDAAERAQREHRRAVLIGPTPSLDAPLLRQIVNRGVVTAAGATAAWAIGRWTPGTERRTATMGLTALVMTQLAQTLLTRRHSPLVIATALGSAGVLVGIIQTPVISHFSGVPRWDRSPGRASSAPRQEPPQSQRWHRSGWQAQSVSCNLMNALTTRKTLTRVDRTYRRPR</sequence>
<dbReference type="EC" id="7.2.2.-"/>
<dbReference type="EMBL" id="AL123456">
    <property type="protein sequence ID" value="CCP42832.1"/>
    <property type="molecule type" value="Genomic_DNA"/>
</dbReference>
<dbReference type="PIR" id="C70752">
    <property type="entry name" value="C70752"/>
</dbReference>
<dbReference type="RefSeq" id="NP_214621.1">
    <property type="nucleotide sequence ID" value="NC_000962.3"/>
</dbReference>
<dbReference type="RefSeq" id="WP_010886065.1">
    <property type="nucleotide sequence ID" value="NC_000962.3"/>
</dbReference>
<dbReference type="SMR" id="P9WPS5"/>
<dbReference type="STRING" id="83332.Rv0107c"/>
<dbReference type="PaxDb" id="83332-Rv0107c"/>
<dbReference type="GeneID" id="886915"/>
<dbReference type="KEGG" id="mtu:Rv0107c"/>
<dbReference type="KEGG" id="mtv:RVBD_0107c"/>
<dbReference type="TubercuList" id="Rv0107c"/>
<dbReference type="eggNOG" id="COG0474">
    <property type="taxonomic scope" value="Bacteria"/>
</dbReference>
<dbReference type="InParanoid" id="P9WPS5"/>
<dbReference type="OrthoDB" id="9814270at2"/>
<dbReference type="PhylomeDB" id="P9WPS5"/>
<dbReference type="Proteomes" id="UP000001584">
    <property type="component" value="Chromosome"/>
</dbReference>
<dbReference type="GO" id="GO:0005829">
    <property type="term" value="C:cytosol"/>
    <property type="evidence" value="ECO:0007005"/>
    <property type="project" value="MTBBASE"/>
</dbReference>
<dbReference type="GO" id="GO:0043231">
    <property type="term" value="C:intracellular membrane-bounded organelle"/>
    <property type="evidence" value="ECO:0000318"/>
    <property type="project" value="GO_Central"/>
</dbReference>
<dbReference type="GO" id="GO:0009274">
    <property type="term" value="C:peptidoglycan-based cell wall"/>
    <property type="evidence" value="ECO:0007005"/>
    <property type="project" value="MTBBASE"/>
</dbReference>
<dbReference type="GO" id="GO:0005886">
    <property type="term" value="C:plasma membrane"/>
    <property type="evidence" value="ECO:0007005"/>
    <property type="project" value="MTBBASE"/>
</dbReference>
<dbReference type="GO" id="GO:0005524">
    <property type="term" value="F:ATP binding"/>
    <property type="evidence" value="ECO:0007669"/>
    <property type="project" value="UniProtKB-KW"/>
</dbReference>
<dbReference type="GO" id="GO:0016887">
    <property type="term" value="F:ATP hydrolysis activity"/>
    <property type="evidence" value="ECO:0007669"/>
    <property type="project" value="InterPro"/>
</dbReference>
<dbReference type="GO" id="GO:0046872">
    <property type="term" value="F:metal ion binding"/>
    <property type="evidence" value="ECO:0007669"/>
    <property type="project" value="UniProtKB-KW"/>
</dbReference>
<dbReference type="GO" id="GO:0005388">
    <property type="term" value="F:P-type calcium transporter activity"/>
    <property type="evidence" value="ECO:0000318"/>
    <property type="project" value="GO_Central"/>
</dbReference>
<dbReference type="CDD" id="cd07539">
    <property type="entry name" value="P-type_ATPase"/>
    <property type="match status" value="1"/>
</dbReference>
<dbReference type="FunFam" id="2.70.150.10:FF:000082">
    <property type="entry name" value="Cation-transporter ATPase I CtpI"/>
    <property type="match status" value="1"/>
</dbReference>
<dbReference type="Gene3D" id="3.40.1110.10">
    <property type="entry name" value="Calcium-transporting ATPase, cytoplasmic domain N"/>
    <property type="match status" value="1"/>
</dbReference>
<dbReference type="Gene3D" id="2.70.150.10">
    <property type="entry name" value="Calcium-transporting ATPase, cytoplasmic transduction domain A"/>
    <property type="match status" value="1"/>
</dbReference>
<dbReference type="Gene3D" id="1.20.1110.10">
    <property type="entry name" value="Calcium-transporting ATPase, transmembrane domain"/>
    <property type="match status" value="1"/>
</dbReference>
<dbReference type="Gene3D" id="3.40.50.1000">
    <property type="entry name" value="HAD superfamily/HAD-like"/>
    <property type="match status" value="1"/>
</dbReference>
<dbReference type="InterPro" id="IPR006068">
    <property type="entry name" value="ATPase_P-typ_cation-transptr_C"/>
</dbReference>
<dbReference type="InterPro" id="IPR023299">
    <property type="entry name" value="ATPase_P-typ_cyto_dom_N"/>
</dbReference>
<dbReference type="InterPro" id="IPR018303">
    <property type="entry name" value="ATPase_P-typ_P_site"/>
</dbReference>
<dbReference type="InterPro" id="IPR023298">
    <property type="entry name" value="ATPase_P-typ_TM_dom_sf"/>
</dbReference>
<dbReference type="InterPro" id="IPR008250">
    <property type="entry name" value="ATPase_P-typ_transduc_dom_A_sf"/>
</dbReference>
<dbReference type="InterPro" id="IPR036412">
    <property type="entry name" value="HAD-like_sf"/>
</dbReference>
<dbReference type="InterPro" id="IPR023214">
    <property type="entry name" value="HAD_sf"/>
</dbReference>
<dbReference type="InterPro" id="IPR001757">
    <property type="entry name" value="P_typ_ATPase"/>
</dbReference>
<dbReference type="InterPro" id="IPR044492">
    <property type="entry name" value="P_typ_ATPase_HD_dom"/>
</dbReference>
<dbReference type="NCBIfam" id="TIGR01494">
    <property type="entry name" value="ATPase_P-type"/>
    <property type="match status" value="2"/>
</dbReference>
<dbReference type="PANTHER" id="PTHR24093">
    <property type="entry name" value="CATION TRANSPORTING ATPASE"/>
    <property type="match status" value="1"/>
</dbReference>
<dbReference type="PANTHER" id="PTHR24093:SF513">
    <property type="entry name" value="CATION-TRANSPORTING ATPASE I-RELATED"/>
    <property type="match status" value="1"/>
</dbReference>
<dbReference type="Pfam" id="PF00689">
    <property type="entry name" value="Cation_ATPase_C"/>
    <property type="match status" value="1"/>
</dbReference>
<dbReference type="Pfam" id="PF00122">
    <property type="entry name" value="E1-E2_ATPase"/>
    <property type="match status" value="1"/>
</dbReference>
<dbReference type="Pfam" id="PF00702">
    <property type="entry name" value="Hydrolase"/>
    <property type="match status" value="1"/>
</dbReference>
<dbReference type="PRINTS" id="PR00119">
    <property type="entry name" value="CATATPASE"/>
</dbReference>
<dbReference type="PRINTS" id="PR00120">
    <property type="entry name" value="HATPASE"/>
</dbReference>
<dbReference type="SFLD" id="SFLDG00002">
    <property type="entry name" value="C1.7:_P-type_atpase_like"/>
    <property type="match status" value="1"/>
</dbReference>
<dbReference type="SFLD" id="SFLDF00027">
    <property type="entry name" value="p-type_atpase"/>
    <property type="match status" value="1"/>
</dbReference>
<dbReference type="SUPFAM" id="SSF81653">
    <property type="entry name" value="Calcium ATPase, transduction domain A"/>
    <property type="match status" value="1"/>
</dbReference>
<dbReference type="SUPFAM" id="SSF81665">
    <property type="entry name" value="Calcium ATPase, transmembrane domain M"/>
    <property type="match status" value="1"/>
</dbReference>
<dbReference type="SUPFAM" id="SSF56784">
    <property type="entry name" value="HAD-like"/>
    <property type="match status" value="1"/>
</dbReference>
<dbReference type="PROSITE" id="PS00154">
    <property type="entry name" value="ATPASE_E1_E2"/>
    <property type="match status" value="1"/>
</dbReference>
<evidence type="ECO:0000250" key="1"/>
<evidence type="ECO:0000255" key="2"/>
<evidence type="ECO:0000256" key="3">
    <source>
        <dbReference type="SAM" id="MobiDB-lite"/>
    </source>
</evidence>
<evidence type="ECO:0000305" key="4"/>
<protein>
    <recommendedName>
        <fullName>Probable cation-transporting ATPase I</fullName>
        <ecNumber>7.2.2.-</ecNumber>
    </recommendedName>
</protein>
<feature type="chain" id="PRO_0000046347" description="Probable cation-transporting ATPase I">
    <location>
        <begin position="1"/>
        <end position="1632"/>
    </location>
</feature>
<feature type="transmembrane region" description="Helical" evidence="2">
    <location>
        <begin position="148"/>
        <end position="168"/>
    </location>
</feature>
<feature type="transmembrane region" description="Helical" evidence="2">
    <location>
        <begin position="177"/>
        <end position="197"/>
    </location>
</feature>
<feature type="transmembrane region" description="Helical" evidence="2">
    <location>
        <begin position="358"/>
        <end position="378"/>
    </location>
</feature>
<feature type="transmembrane region" description="Helical" evidence="2">
    <location>
        <begin position="637"/>
        <end position="657"/>
    </location>
</feature>
<feature type="transmembrane region" description="Helical" evidence="2">
    <location>
        <begin position="673"/>
        <end position="693"/>
    </location>
</feature>
<feature type="transmembrane region" description="Helical" evidence="2">
    <location>
        <begin position="778"/>
        <end position="798"/>
    </location>
</feature>
<feature type="transmembrane region" description="Helical" evidence="2">
    <location>
        <begin position="968"/>
        <end position="988"/>
    </location>
</feature>
<feature type="transmembrane region" description="Helical" evidence="2">
    <location>
        <begin position="997"/>
        <end position="1017"/>
    </location>
</feature>
<feature type="transmembrane region" description="Helical" evidence="2">
    <location>
        <begin position="1401"/>
        <end position="1421"/>
    </location>
</feature>
<feature type="transmembrane region" description="Helical" evidence="2">
    <location>
        <begin position="1432"/>
        <end position="1452"/>
    </location>
</feature>
<feature type="transmembrane region" description="Helical" evidence="2">
    <location>
        <begin position="1547"/>
        <end position="1567"/>
    </location>
</feature>
<feature type="region of interest" description="Disordered" evidence="3">
    <location>
        <begin position="1573"/>
        <end position="1601"/>
    </location>
</feature>
<feature type="active site" description="4-aspartylphosphate intermediate" evidence="1">
    <location>
        <position position="1053"/>
    </location>
</feature>
<feature type="binding site" evidence="1">
    <location>
        <position position="1340"/>
    </location>
    <ligand>
        <name>Mg(2+)</name>
        <dbReference type="ChEBI" id="CHEBI:18420"/>
    </ligand>
</feature>
<feature type="binding site" evidence="1">
    <location>
        <position position="1344"/>
    </location>
    <ligand>
        <name>Mg(2+)</name>
        <dbReference type="ChEBI" id="CHEBI:18420"/>
    </ligand>
</feature>
<reference key="1">
    <citation type="journal article" date="1998" name="Nature">
        <title>Deciphering the biology of Mycobacterium tuberculosis from the complete genome sequence.</title>
        <authorList>
            <person name="Cole S.T."/>
            <person name="Brosch R."/>
            <person name="Parkhill J."/>
            <person name="Garnier T."/>
            <person name="Churcher C.M."/>
            <person name="Harris D.E."/>
            <person name="Gordon S.V."/>
            <person name="Eiglmeier K."/>
            <person name="Gas S."/>
            <person name="Barry C.E. III"/>
            <person name="Tekaia F."/>
            <person name="Badcock K."/>
            <person name="Basham D."/>
            <person name="Brown D."/>
            <person name="Chillingworth T."/>
            <person name="Connor R."/>
            <person name="Davies R.M."/>
            <person name="Devlin K."/>
            <person name="Feltwell T."/>
            <person name="Gentles S."/>
            <person name="Hamlin N."/>
            <person name="Holroyd S."/>
            <person name="Hornsby T."/>
            <person name="Jagels K."/>
            <person name="Krogh A."/>
            <person name="McLean J."/>
            <person name="Moule S."/>
            <person name="Murphy L.D."/>
            <person name="Oliver S."/>
            <person name="Osborne J."/>
            <person name="Quail M.A."/>
            <person name="Rajandream M.A."/>
            <person name="Rogers J."/>
            <person name="Rutter S."/>
            <person name="Seeger K."/>
            <person name="Skelton S."/>
            <person name="Squares S."/>
            <person name="Squares R."/>
            <person name="Sulston J.E."/>
            <person name="Taylor K."/>
            <person name="Whitehead S."/>
            <person name="Barrell B.G."/>
        </authorList>
    </citation>
    <scope>NUCLEOTIDE SEQUENCE [LARGE SCALE GENOMIC DNA]</scope>
    <source>
        <strain>ATCC 25618 / H37Rv</strain>
    </source>
</reference>
<reference key="2">
    <citation type="journal article" date="2011" name="Mol. Cell. Proteomics">
        <title>Proteogenomic analysis of Mycobacterium tuberculosis by high resolution mass spectrometry.</title>
        <authorList>
            <person name="Kelkar D.S."/>
            <person name="Kumar D."/>
            <person name="Kumar P."/>
            <person name="Balakrishnan L."/>
            <person name="Muthusamy B."/>
            <person name="Yadav A.K."/>
            <person name="Shrivastava P."/>
            <person name="Marimuthu A."/>
            <person name="Anand S."/>
            <person name="Sundaram H."/>
            <person name="Kingsbury R."/>
            <person name="Harsha H.C."/>
            <person name="Nair B."/>
            <person name="Prasad T.S."/>
            <person name="Chauhan D.S."/>
            <person name="Katoch K."/>
            <person name="Katoch V.M."/>
            <person name="Kumar P."/>
            <person name="Chaerkady R."/>
            <person name="Ramachandran S."/>
            <person name="Dash D."/>
            <person name="Pandey A."/>
        </authorList>
    </citation>
    <scope>IDENTIFICATION BY MASS SPECTROMETRY [LARGE SCALE ANALYSIS]</scope>
    <source>
        <strain>ATCC 25618 / H37Rv</strain>
    </source>
</reference>
<proteinExistence type="evidence at protein level"/>
<name>CTPI_MYCTU</name>
<comment type="catalytic activity">
    <reaction>
        <text>ATP + H2O = ADP + phosphate + H(+)</text>
        <dbReference type="Rhea" id="RHEA:13065"/>
        <dbReference type="ChEBI" id="CHEBI:15377"/>
        <dbReference type="ChEBI" id="CHEBI:15378"/>
        <dbReference type="ChEBI" id="CHEBI:30616"/>
        <dbReference type="ChEBI" id="CHEBI:43474"/>
        <dbReference type="ChEBI" id="CHEBI:456216"/>
    </reaction>
</comment>
<comment type="subcellular location">
    <subcellularLocation>
        <location evidence="4">Cell membrane</location>
        <topology evidence="4">Multi-pass membrane protein</topology>
    </subcellularLocation>
</comment>
<comment type="similarity">
    <text evidence="4">Belongs to the cation transport ATPase (P-type) (TC 3.A.3) family.</text>
</comment>
<accession>P9WPS5</accession>
<accession>L0T5J4</accession>
<accession>Q10900</accession>